<proteinExistence type="inferred from homology"/>
<protein>
    <recommendedName>
        <fullName evidence="1">Ribosome maturation factor RimM</fullName>
    </recommendedName>
</protein>
<reference key="1">
    <citation type="journal article" date="2008" name="J. Bacteriol.">
        <title>Genome sequence of Lactobacillus helveticus: an organism distinguished by selective gene loss and IS element expansion.</title>
        <authorList>
            <person name="Callanan M."/>
            <person name="Kaleta P."/>
            <person name="O'Callaghan J."/>
            <person name="O'Sullivan O."/>
            <person name="Jordan K."/>
            <person name="McAuliffe O."/>
            <person name="Sangrador-Vegas A."/>
            <person name="Slattery L."/>
            <person name="Fitzgerald G.F."/>
            <person name="Beresford T."/>
            <person name="Ross R.P."/>
        </authorList>
    </citation>
    <scope>NUCLEOTIDE SEQUENCE [LARGE SCALE GENOMIC DNA]</scope>
    <source>
        <strain>DPC 4571</strain>
    </source>
</reference>
<organism>
    <name type="scientific">Lactobacillus helveticus (strain DPC 4571)</name>
    <dbReference type="NCBI Taxonomy" id="405566"/>
    <lineage>
        <taxon>Bacteria</taxon>
        <taxon>Bacillati</taxon>
        <taxon>Bacillota</taxon>
        <taxon>Bacilli</taxon>
        <taxon>Lactobacillales</taxon>
        <taxon>Lactobacillaceae</taxon>
        <taxon>Lactobacillus</taxon>
    </lineage>
</organism>
<dbReference type="EMBL" id="CP000517">
    <property type="protein sequence ID" value="ABX27368.1"/>
    <property type="molecule type" value="Genomic_DNA"/>
</dbReference>
<dbReference type="RefSeq" id="WP_003629074.1">
    <property type="nucleotide sequence ID" value="NC_010080.1"/>
</dbReference>
<dbReference type="SMR" id="A8YVT3"/>
<dbReference type="KEGG" id="lhe:lhv_1370"/>
<dbReference type="eggNOG" id="COG0806">
    <property type="taxonomic scope" value="Bacteria"/>
</dbReference>
<dbReference type="HOGENOM" id="CLU_077636_3_1_9"/>
<dbReference type="Proteomes" id="UP000000790">
    <property type="component" value="Chromosome"/>
</dbReference>
<dbReference type="GO" id="GO:0005737">
    <property type="term" value="C:cytoplasm"/>
    <property type="evidence" value="ECO:0007669"/>
    <property type="project" value="UniProtKB-SubCell"/>
</dbReference>
<dbReference type="GO" id="GO:0005840">
    <property type="term" value="C:ribosome"/>
    <property type="evidence" value="ECO:0007669"/>
    <property type="project" value="InterPro"/>
</dbReference>
<dbReference type="GO" id="GO:0043022">
    <property type="term" value="F:ribosome binding"/>
    <property type="evidence" value="ECO:0007669"/>
    <property type="project" value="InterPro"/>
</dbReference>
<dbReference type="GO" id="GO:0042274">
    <property type="term" value="P:ribosomal small subunit biogenesis"/>
    <property type="evidence" value="ECO:0007669"/>
    <property type="project" value="UniProtKB-UniRule"/>
</dbReference>
<dbReference type="GO" id="GO:0006364">
    <property type="term" value="P:rRNA processing"/>
    <property type="evidence" value="ECO:0007669"/>
    <property type="project" value="UniProtKB-UniRule"/>
</dbReference>
<dbReference type="Gene3D" id="2.30.30.240">
    <property type="entry name" value="PRC-barrel domain"/>
    <property type="match status" value="1"/>
</dbReference>
<dbReference type="Gene3D" id="2.40.30.60">
    <property type="entry name" value="RimM"/>
    <property type="match status" value="1"/>
</dbReference>
<dbReference type="HAMAP" id="MF_00014">
    <property type="entry name" value="Ribosome_mat_RimM"/>
    <property type="match status" value="1"/>
</dbReference>
<dbReference type="InterPro" id="IPR011033">
    <property type="entry name" value="PRC_barrel-like_sf"/>
</dbReference>
<dbReference type="InterPro" id="IPR056792">
    <property type="entry name" value="PRC_RimM"/>
</dbReference>
<dbReference type="InterPro" id="IPR011961">
    <property type="entry name" value="RimM"/>
</dbReference>
<dbReference type="InterPro" id="IPR002676">
    <property type="entry name" value="RimM_N"/>
</dbReference>
<dbReference type="InterPro" id="IPR036976">
    <property type="entry name" value="RimM_N_sf"/>
</dbReference>
<dbReference type="InterPro" id="IPR009000">
    <property type="entry name" value="Transl_B-barrel_sf"/>
</dbReference>
<dbReference type="NCBIfam" id="TIGR02273">
    <property type="entry name" value="16S_RimM"/>
    <property type="match status" value="1"/>
</dbReference>
<dbReference type="PANTHER" id="PTHR33692">
    <property type="entry name" value="RIBOSOME MATURATION FACTOR RIMM"/>
    <property type="match status" value="1"/>
</dbReference>
<dbReference type="PANTHER" id="PTHR33692:SF1">
    <property type="entry name" value="RIBOSOME MATURATION FACTOR RIMM"/>
    <property type="match status" value="1"/>
</dbReference>
<dbReference type="Pfam" id="PF24986">
    <property type="entry name" value="PRC_RimM"/>
    <property type="match status" value="1"/>
</dbReference>
<dbReference type="Pfam" id="PF01782">
    <property type="entry name" value="RimM"/>
    <property type="match status" value="1"/>
</dbReference>
<dbReference type="SUPFAM" id="SSF50346">
    <property type="entry name" value="PRC-barrel domain"/>
    <property type="match status" value="1"/>
</dbReference>
<dbReference type="SUPFAM" id="SSF50447">
    <property type="entry name" value="Translation proteins"/>
    <property type="match status" value="1"/>
</dbReference>
<gene>
    <name evidence="1" type="primary">rimM</name>
    <name type="ordered locus">lhv_1370</name>
</gene>
<sequence>MEYFDVARILTTHGLNGEVKVNVITDFPEERFAEGMHLSLRSDTNRTLTVEKSRPFKQFWLIQFKEITDIDQAEKLRGQILVVSEEDRGELPDGVYYYKDIFDCDVIDEETGKRIGKIVDIQSPGANDIWLVREDDGKEYWIPNIADVVKKVDVAAKKVYVELMEGLRDED</sequence>
<accession>A8YVT3</accession>
<keyword id="KW-0143">Chaperone</keyword>
<keyword id="KW-0963">Cytoplasm</keyword>
<keyword id="KW-0690">Ribosome biogenesis</keyword>
<keyword id="KW-0698">rRNA processing</keyword>
<evidence type="ECO:0000255" key="1">
    <source>
        <dbReference type="HAMAP-Rule" id="MF_00014"/>
    </source>
</evidence>
<comment type="function">
    <text evidence="1">An accessory protein needed during the final step in the assembly of 30S ribosomal subunit, possibly for assembly of the head region. Essential for efficient processing of 16S rRNA. May be needed both before and after RbfA during the maturation of 16S rRNA. It has affinity for free ribosomal 30S subunits but not for 70S ribosomes.</text>
</comment>
<comment type="subunit">
    <text evidence="1">Binds ribosomal protein uS19.</text>
</comment>
<comment type="subcellular location">
    <subcellularLocation>
        <location evidence="1">Cytoplasm</location>
    </subcellularLocation>
</comment>
<comment type="domain">
    <text evidence="1">The PRC barrel domain binds ribosomal protein uS19.</text>
</comment>
<comment type="similarity">
    <text evidence="1">Belongs to the RimM family.</text>
</comment>
<feature type="chain" id="PRO_1000070961" description="Ribosome maturation factor RimM">
    <location>
        <begin position="1"/>
        <end position="171"/>
    </location>
</feature>
<feature type="domain" description="PRC barrel" evidence="1">
    <location>
        <begin position="93"/>
        <end position="167"/>
    </location>
</feature>
<name>RIMM_LACH4</name>